<accession>Q88Z39</accession>
<accession>F9UL12</accession>
<dbReference type="EC" id="3.1.1.29" evidence="1"/>
<dbReference type="EMBL" id="AL935263">
    <property type="protein sequence ID" value="CCC78027.1"/>
    <property type="molecule type" value="Genomic_DNA"/>
</dbReference>
<dbReference type="RefSeq" id="WP_011101048.1">
    <property type="nucleotide sequence ID" value="NC_004567.2"/>
</dbReference>
<dbReference type="RefSeq" id="YP_004888541.1">
    <property type="nucleotide sequence ID" value="NC_004567.2"/>
</dbReference>
<dbReference type="SMR" id="Q88Z39"/>
<dbReference type="STRING" id="220668.lp_0538"/>
<dbReference type="EnsemblBacteria" id="CCC78027">
    <property type="protein sequence ID" value="CCC78027"/>
    <property type="gene ID" value="lp_0538"/>
</dbReference>
<dbReference type="KEGG" id="lpl:lp_0538"/>
<dbReference type="PATRIC" id="fig|220668.9.peg.445"/>
<dbReference type="eggNOG" id="COG0193">
    <property type="taxonomic scope" value="Bacteria"/>
</dbReference>
<dbReference type="HOGENOM" id="CLU_062456_4_1_9"/>
<dbReference type="OrthoDB" id="9800507at2"/>
<dbReference type="PhylomeDB" id="Q88Z39"/>
<dbReference type="Proteomes" id="UP000000432">
    <property type="component" value="Chromosome"/>
</dbReference>
<dbReference type="GO" id="GO:0005737">
    <property type="term" value="C:cytoplasm"/>
    <property type="evidence" value="ECO:0007669"/>
    <property type="project" value="UniProtKB-SubCell"/>
</dbReference>
<dbReference type="GO" id="GO:0004045">
    <property type="term" value="F:peptidyl-tRNA hydrolase activity"/>
    <property type="evidence" value="ECO:0007669"/>
    <property type="project" value="UniProtKB-UniRule"/>
</dbReference>
<dbReference type="GO" id="GO:0000049">
    <property type="term" value="F:tRNA binding"/>
    <property type="evidence" value="ECO:0007669"/>
    <property type="project" value="UniProtKB-UniRule"/>
</dbReference>
<dbReference type="GO" id="GO:0006515">
    <property type="term" value="P:protein quality control for misfolded or incompletely synthesized proteins"/>
    <property type="evidence" value="ECO:0007669"/>
    <property type="project" value="UniProtKB-UniRule"/>
</dbReference>
<dbReference type="GO" id="GO:0072344">
    <property type="term" value="P:rescue of stalled ribosome"/>
    <property type="evidence" value="ECO:0007669"/>
    <property type="project" value="UniProtKB-UniRule"/>
</dbReference>
<dbReference type="CDD" id="cd00462">
    <property type="entry name" value="PTH"/>
    <property type="match status" value="1"/>
</dbReference>
<dbReference type="FunFam" id="3.40.50.1470:FF:000001">
    <property type="entry name" value="Peptidyl-tRNA hydrolase"/>
    <property type="match status" value="1"/>
</dbReference>
<dbReference type="Gene3D" id="3.40.50.1470">
    <property type="entry name" value="Peptidyl-tRNA hydrolase"/>
    <property type="match status" value="1"/>
</dbReference>
<dbReference type="HAMAP" id="MF_00083">
    <property type="entry name" value="Pept_tRNA_hydro_bact"/>
    <property type="match status" value="1"/>
</dbReference>
<dbReference type="InterPro" id="IPR001328">
    <property type="entry name" value="Pept_tRNA_hydro"/>
</dbReference>
<dbReference type="InterPro" id="IPR018171">
    <property type="entry name" value="Pept_tRNA_hydro_CS"/>
</dbReference>
<dbReference type="InterPro" id="IPR036416">
    <property type="entry name" value="Pept_tRNA_hydro_sf"/>
</dbReference>
<dbReference type="NCBIfam" id="TIGR00447">
    <property type="entry name" value="pth"/>
    <property type="match status" value="1"/>
</dbReference>
<dbReference type="PANTHER" id="PTHR17224">
    <property type="entry name" value="PEPTIDYL-TRNA HYDROLASE"/>
    <property type="match status" value="1"/>
</dbReference>
<dbReference type="PANTHER" id="PTHR17224:SF1">
    <property type="entry name" value="PEPTIDYL-TRNA HYDROLASE"/>
    <property type="match status" value="1"/>
</dbReference>
<dbReference type="Pfam" id="PF01195">
    <property type="entry name" value="Pept_tRNA_hydro"/>
    <property type="match status" value="1"/>
</dbReference>
<dbReference type="SUPFAM" id="SSF53178">
    <property type="entry name" value="Peptidyl-tRNA hydrolase-like"/>
    <property type="match status" value="1"/>
</dbReference>
<dbReference type="PROSITE" id="PS01195">
    <property type="entry name" value="PEPT_TRNA_HYDROL_1"/>
    <property type="match status" value="1"/>
</dbReference>
<dbReference type="PROSITE" id="PS01196">
    <property type="entry name" value="PEPT_TRNA_HYDROL_2"/>
    <property type="match status" value="1"/>
</dbReference>
<name>PTH_LACPL</name>
<keyword id="KW-0963">Cytoplasm</keyword>
<keyword id="KW-0378">Hydrolase</keyword>
<keyword id="KW-1185">Reference proteome</keyword>
<keyword id="KW-0694">RNA-binding</keyword>
<keyword id="KW-0820">tRNA-binding</keyword>
<proteinExistence type="inferred from homology"/>
<reference key="1">
    <citation type="journal article" date="2003" name="Proc. Natl. Acad. Sci. U.S.A.">
        <title>Complete genome sequence of Lactobacillus plantarum WCFS1.</title>
        <authorList>
            <person name="Kleerebezem M."/>
            <person name="Boekhorst J."/>
            <person name="van Kranenburg R."/>
            <person name="Molenaar D."/>
            <person name="Kuipers O.P."/>
            <person name="Leer R."/>
            <person name="Tarchini R."/>
            <person name="Peters S.A."/>
            <person name="Sandbrink H.M."/>
            <person name="Fiers M.W.E.J."/>
            <person name="Stiekema W."/>
            <person name="Klein Lankhorst R.M."/>
            <person name="Bron P.A."/>
            <person name="Hoffer S.M."/>
            <person name="Nierop Groot M.N."/>
            <person name="Kerkhoven R."/>
            <person name="De Vries M."/>
            <person name="Ursing B."/>
            <person name="De Vos W.M."/>
            <person name="Siezen R.J."/>
        </authorList>
    </citation>
    <scope>NUCLEOTIDE SEQUENCE [LARGE SCALE GENOMIC DNA]</scope>
    <source>
        <strain>ATCC BAA-793 / NCIMB 8826 / WCFS1</strain>
    </source>
</reference>
<reference key="2">
    <citation type="journal article" date="2012" name="J. Bacteriol.">
        <title>Complete resequencing and reannotation of the Lactobacillus plantarum WCFS1 genome.</title>
        <authorList>
            <person name="Siezen R.J."/>
            <person name="Francke C."/>
            <person name="Renckens B."/>
            <person name="Boekhorst J."/>
            <person name="Wels M."/>
            <person name="Kleerebezem M."/>
            <person name="van Hijum S.A."/>
        </authorList>
    </citation>
    <scope>NUCLEOTIDE SEQUENCE [LARGE SCALE GENOMIC DNA]</scope>
    <scope>GENOME REANNOTATION</scope>
    <source>
        <strain>ATCC BAA-793 / NCIMB 8826 / WCFS1</strain>
    </source>
</reference>
<gene>
    <name evidence="1" type="primary">pth</name>
    <name type="ordered locus">lp_0538</name>
</gene>
<comment type="function">
    <text evidence="1">Hydrolyzes ribosome-free peptidyl-tRNAs (with 1 or more amino acids incorporated), which drop off the ribosome during protein synthesis, or as a result of ribosome stalling.</text>
</comment>
<comment type="function">
    <text evidence="1">Catalyzes the release of premature peptidyl moieties from peptidyl-tRNA molecules trapped in stalled 50S ribosomal subunits, and thus maintains levels of free tRNAs and 50S ribosomes.</text>
</comment>
<comment type="catalytic activity">
    <reaction evidence="1">
        <text>an N-acyl-L-alpha-aminoacyl-tRNA + H2O = an N-acyl-L-amino acid + a tRNA + H(+)</text>
        <dbReference type="Rhea" id="RHEA:54448"/>
        <dbReference type="Rhea" id="RHEA-COMP:10123"/>
        <dbReference type="Rhea" id="RHEA-COMP:13883"/>
        <dbReference type="ChEBI" id="CHEBI:15377"/>
        <dbReference type="ChEBI" id="CHEBI:15378"/>
        <dbReference type="ChEBI" id="CHEBI:59874"/>
        <dbReference type="ChEBI" id="CHEBI:78442"/>
        <dbReference type="ChEBI" id="CHEBI:138191"/>
        <dbReference type="EC" id="3.1.1.29"/>
    </reaction>
</comment>
<comment type="subunit">
    <text evidence="1">Monomer.</text>
</comment>
<comment type="subcellular location">
    <subcellularLocation>
        <location evidence="1">Cytoplasm</location>
    </subcellularLocation>
</comment>
<comment type="similarity">
    <text evidence="1">Belongs to the PTH family.</text>
</comment>
<feature type="chain" id="PRO_0000187755" description="Peptidyl-tRNA hydrolase">
    <location>
        <begin position="1"/>
        <end position="185"/>
    </location>
</feature>
<feature type="active site" description="Proton acceptor" evidence="1">
    <location>
        <position position="19"/>
    </location>
</feature>
<feature type="binding site" evidence="1">
    <location>
        <position position="14"/>
    </location>
    <ligand>
        <name>tRNA</name>
        <dbReference type="ChEBI" id="CHEBI:17843"/>
    </ligand>
</feature>
<feature type="binding site" evidence="1">
    <location>
        <position position="64"/>
    </location>
    <ligand>
        <name>tRNA</name>
        <dbReference type="ChEBI" id="CHEBI:17843"/>
    </ligand>
</feature>
<feature type="binding site" evidence="1">
    <location>
        <position position="66"/>
    </location>
    <ligand>
        <name>tRNA</name>
        <dbReference type="ChEBI" id="CHEBI:17843"/>
    </ligand>
</feature>
<feature type="binding site" evidence="1">
    <location>
        <position position="112"/>
    </location>
    <ligand>
        <name>tRNA</name>
        <dbReference type="ChEBI" id="CHEBI:17843"/>
    </ligand>
</feature>
<feature type="site" description="Discriminates between blocked and unblocked aminoacyl-tRNA" evidence="1">
    <location>
        <position position="9"/>
    </location>
</feature>
<feature type="site" description="Stabilizes the basic form of H active site to accept a proton" evidence="1">
    <location>
        <position position="91"/>
    </location>
</feature>
<protein>
    <recommendedName>
        <fullName evidence="1">Peptidyl-tRNA hydrolase</fullName>
        <shortName evidence="1">Pth</shortName>
        <ecNumber evidence="1">3.1.1.29</ecNumber>
    </recommendedName>
</protein>
<evidence type="ECO:0000255" key="1">
    <source>
        <dbReference type="HAMAP-Rule" id="MF_00083"/>
    </source>
</evidence>
<organism>
    <name type="scientific">Lactiplantibacillus plantarum (strain ATCC BAA-793 / NCIMB 8826 / WCFS1)</name>
    <name type="common">Lactobacillus plantarum</name>
    <dbReference type="NCBI Taxonomy" id="220668"/>
    <lineage>
        <taxon>Bacteria</taxon>
        <taxon>Bacillati</taxon>
        <taxon>Bacillota</taxon>
        <taxon>Bacilli</taxon>
        <taxon>Lactobacillales</taxon>
        <taxon>Lactobacillaceae</taxon>
        <taxon>Lactiplantibacillus</taxon>
    </lineage>
</organism>
<sequence length="185" mass="20293">MKMIVGLGNIGRQYAQTRHNVGFMIVDELASKLNVTFQTSKFEAQVATAFQDGEKILLVKPATYMNDSGRAVGPLMSYYNVDPADLLVIHDDLDLPLGKVRLKQKGSAGGHNGIKSIISHVGDQHFKRVKVGIDHPQKMSVVDYVLGKFTPAEVAKFDDAKITALAAVEAWLANDDFTAVMNQYN</sequence>